<accession>Q2A373</accession>
<proteinExistence type="inferred from homology"/>
<comment type="similarity">
    <text evidence="1">Belongs to the bacterial ribosomal protein bL32 family.</text>
</comment>
<reference key="1">
    <citation type="submission" date="2006-03" db="EMBL/GenBank/DDBJ databases">
        <title>Complete genome sequence of Francisella tularensis LVS (Live Vaccine Strain).</title>
        <authorList>
            <person name="Chain P."/>
            <person name="Larimer F."/>
            <person name="Land M."/>
            <person name="Stilwagen S."/>
            <person name="Larsson P."/>
            <person name="Bearden S."/>
            <person name="Chu M."/>
            <person name="Oyston P."/>
            <person name="Forsman M."/>
            <person name="Andersson S."/>
            <person name="Lindler L."/>
            <person name="Titball R."/>
            <person name="Garcia E."/>
        </authorList>
    </citation>
    <scope>NUCLEOTIDE SEQUENCE [LARGE SCALE GENOMIC DNA]</scope>
    <source>
        <strain>LVS</strain>
    </source>
</reference>
<protein>
    <recommendedName>
        <fullName evidence="1">Large ribosomal subunit protein bL32</fullName>
    </recommendedName>
    <alternativeName>
        <fullName evidence="3">50S ribosomal protein L32</fullName>
    </alternativeName>
</protein>
<organism>
    <name type="scientific">Francisella tularensis subsp. holarctica (strain LVS)</name>
    <dbReference type="NCBI Taxonomy" id="376619"/>
    <lineage>
        <taxon>Bacteria</taxon>
        <taxon>Pseudomonadati</taxon>
        <taxon>Pseudomonadota</taxon>
        <taxon>Gammaproteobacteria</taxon>
        <taxon>Thiotrichales</taxon>
        <taxon>Francisellaceae</taxon>
        <taxon>Francisella</taxon>
    </lineage>
</organism>
<sequence length="60" mass="6879">MAVQQVKKSRSKRDMRRSHDSLTNPTLSTDKSTGELHLRHHVSPNGFYKGRKVVDTKSED</sequence>
<evidence type="ECO:0000255" key="1">
    <source>
        <dbReference type="HAMAP-Rule" id="MF_00340"/>
    </source>
</evidence>
<evidence type="ECO:0000256" key="2">
    <source>
        <dbReference type="SAM" id="MobiDB-lite"/>
    </source>
</evidence>
<evidence type="ECO:0000305" key="3"/>
<gene>
    <name evidence="1" type="primary">rpmF</name>
    <name type="ordered locus">FTL_1143</name>
</gene>
<name>RL32_FRATH</name>
<dbReference type="EMBL" id="AM233362">
    <property type="protein sequence ID" value="CAJ79582.1"/>
    <property type="molecule type" value="Genomic_DNA"/>
</dbReference>
<dbReference type="RefSeq" id="WP_003016134.1">
    <property type="nucleotide sequence ID" value="NZ_CP009694.1"/>
</dbReference>
<dbReference type="SMR" id="Q2A373"/>
<dbReference type="GeneID" id="75264932"/>
<dbReference type="KEGG" id="ftl:FTL_1143"/>
<dbReference type="Proteomes" id="UP000001944">
    <property type="component" value="Chromosome"/>
</dbReference>
<dbReference type="GO" id="GO:0015934">
    <property type="term" value="C:large ribosomal subunit"/>
    <property type="evidence" value="ECO:0007669"/>
    <property type="project" value="InterPro"/>
</dbReference>
<dbReference type="GO" id="GO:0003735">
    <property type="term" value="F:structural constituent of ribosome"/>
    <property type="evidence" value="ECO:0007669"/>
    <property type="project" value="InterPro"/>
</dbReference>
<dbReference type="GO" id="GO:0006412">
    <property type="term" value="P:translation"/>
    <property type="evidence" value="ECO:0007669"/>
    <property type="project" value="UniProtKB-UniRule"/>
</dbReference>
<dbReference type="HAMAP" id="MF_00340">
    <property type="entry name" value="Ribosomal_bL32"/>
    <property type="match status" value="1"/>
</dbReference>
<dbReference type="InterPro" id="IPR002677">
    <property type="entry name" value="Ribosomal_bL32"/>
</dbReference>
<dbReference type="InterPro" id="IPR044957">
    <property type="entry name" value="Ribosomal_bL32_bact"/>
</dbReference>
<dbReference type="InterPro" id="IPR011332">
    <property type="entry name" value="Ribosomal_zn-bd"/>
</dbReference>
<dbReference type="NCBIfam" id="TIGR01031">
    <property type="entry name" value="rpmF_bact"/>
    <property type="match status" value="1"/>
</dbReference>
<dbReference type="PANTHER" id="PTHR35534">
    <property type="entry name" value="50S RIBOSOMAL PROTEIN L32"/>
    <property type="match status" value="1"/>
</dbReference>
<dbReference type="PANTHER" id="PTHR35534:SF1">
    <property type="entry name" value="LARGE RIBOSOMAL SUBUNIT PROTEIN BL32"/>
    <property type="match status" value="1"/>
</dbReference>
<dbReference type="Pfam" id="PF01783">
    <property type="entry name" value="Ribosomal_L32p"/>
    <property type="match status" value="1"/>
</dbReference>
<dbReference type="SUPFAM" id="SSF57829">
    <property type="entry name" value="Zn-binding ribosomal proteins"/>
    <property type="match status" value="1"/>
</dbReference>
<feature type="chain" id="PRO_0000296464" description="Large ribosomal subunit protein bL32">
    <location>
        <begin position="1"/>
        <end position="60"/>
    </location>
</feature>
<feature type="region of interest" description="Disordered" evidence="2">
    <location>
        <begin position="1"/>
        <end position="60"/>
    </location>
</feature>
<feature type="compositionally biased region" description="Basic residues" evidence="2">
    <location>
        <begin position="7"/>
        <end position="16"/>
    </location>
</feature>
<feature type="compositionally biased region" description="Polar residues" evidence="2">
    <location>
        <begin position="22"/>
        <end position="31"/>
    </location>
</feature>
<keyword id="KW-1185">Reference proteome</keyword>
<keyword id="KW-0687">Ribonucleoprotein</keyword>
<keyword id="KW-0689">Ribosomal protein</keyword>